<accession>Q8G8D1</accession>
<evidence type="ECO:0000250" key="1"/>
<evidence type="ECO:0000255" key="2"/>
<evidence type="ECO:0000305" key="3"/>
<keyword id="KW-0067">ATP-binding</keyword>
<keyword id="KW-0235">DNA replication</keyword>
<keyword id="KW-0547">Nucleotide-binding</keyword>
<keyword id="KW-0614">Plasmid</keyword>
<sequence length="377" mass="44377">MKLRICELVINKTLITKTKIETILETKKKAIQNYAYILHDKDIYQNEKEAQLNGKKVGDIKAPHWHIYLRFNYSQDTKHISQWFNTQENFVSKIKGRFSDALMYMIHANRLDKHQYDEKEVVSNFDWKSEAQQDIFNRKYKMDARLKDILLKIHSGEIKEYNINDNINILENNIYATAIEKAFKFRIRDLKKKVRQMECIFITGLSGSGKSTLAKKIAEDKNYEAYISSGSNDILDDYCGEECIILDDLRSNCLGLSDLLKMLDNNTASSVKSRYKNKVLECQLIIITTVKSIDDFFEDIFRKDESIIQLKRRCKLHIKIDSKYIYYSVWNPIEMKYDLIEKKPNNLLNDFQIKSLSKKEAKDYIKSISNIDLDKDC</sequence>
<protein>
    <recommendedName>
        <fullName>Replication protein</fullName>
    </recommendedName>
</protein>
<feature type="chain" id="PRO_0000068329" description="Replication protein">
    <location>
        <begin position="1"/>
        <end position="377"/>
    </location>
</feature>
<feature type="binding site" evidence="2">
    <location>
        <begin position="204"/>
        <end position="211"/>
    </location>
    <ligand>
        <name>ATP</name>
        <dbReference type="ChEBI" id="CHEBI:30616"/>
    </ligand>
</feature>
<gene>
    <name type="primary">rep</name>
    <name type="ordered locus">PAM_790</name>
</gene>
<proteinExistence type="inferred from homology"/>
<reference key="1">
    <citation type="journal article" date="2002" name="Gene">
        <title>A plasmid from a non-insect-transmissible line of a phytoplasma lacks two open reading frames that exist in the plasmid from the wild-type line.</title>
        <authorList>
            <person name="Nishigawa H."/>
            <person name="Oshima K."/>
            <person name="Kakizawa S."/>
            <person name="Jung H.Y."/>
            <person name="Kuboyama T."/>
            <person name="Miyata S."/>
            <person name="Ugaki M."/>
            <person name="Namba S."/>
        </authorList>
    </citation>
    <scope>NUCLEOTIDE SEQUENCE [LARGE SCALE GENOMIC DNA]</scope>
    <source>
        <strain>OY-M</strain>
        <strain>OY-NIM</strain>
    </source>
</reference>
<dbReference type="EMBL" id="AB061723">
    <property type="protein sequence ID" value="BAC23024.1"/>
    <property type="molecule type" value="Genomic_DNA"/>
</dbReference>
<dbReference type="EMBL" id="AB061724">
    <property type="protein sequence ID" value="BAC23025.1"/>
    <property type="molecule type" value="Genomic_DNA"/>
</dbReference>
<dbReference type="RefSeq" id="YP_002600752.1">
    <property type="nucleotide sequence ID" value="NC_012089.1"/>
</dbReference>
<dbReference type="RefSeq" id="YP_002600757.1">
    <property type="nucleotide sequence ID" value="NC_012090.1"/>
</dbReference>
<dbReference type="RefSeq" id="YP_006959604.1">
    <property type="nucleotide sequence ID" value="NC_019170.1"/>
</dbReference>
<dbReference type="RefSeq" id="YP_006959608.1">
    <property type="nucleotide sequence ID" value="NC_019171.1"/>
</dbReference>
<dbReference type="RefSeq" id="YP_006959611.1">
    <property type="nucleotide sequence ID" value="NC_019172.1"/>
</dbReference>
<dbReference type="RefSeq" id="YP_006959614.1">
    <property type="nucleotide sequence ID" value="NC_019173.1"/>
</dbReference>
<dbReference type="STRING" id="262768.PAM_667"/>
<dbReference type="Proteomes" id="UP000002523">
    <property type="component" value="Plasmid pOYM"/>
</dbReference>
<dbReference type="GO" id="GO:0005727">
    <property type="term" value="C:extrachromosomal circular DNA"/>
    <property type="evidence" value="ECO:0007669"/>
    <property type="project" value="InterPro"/>
</dbReference>
<dbReference type="GO" id="GO:0005524">
    <property type="term" value="F:ATP binding"/>
    <property type="evidence" value="ECO:0007669"/>
    <property type="project" value="UniProtKB-KW"/>
</dbReference>
<dbReference type="GO" id="GO:0003677">
    <property type="term" value="F:DNA binding"/>
    <property type="evidence" value="ECO:0007669"/>
    <property type="project" value="InterPro"/>
</dbReference>
<dbReference type="GO" id="GO:0003916">
    <property type="term" value="F:DNA topoisomerase activity"/>
    <property type="evidence" value="ECO:0007669"/>
    <property type="project" value="InterPro"/>
</dbReference>
<dbReference type="GO" id="GO:0003723">
    <property type="term" value="F:RNA binding"/>
    <property type="evidence" value="ECO:0007669"/>
    <property type="project" value="InterPro"/>
</dbReference>
<dbReference type="GO" id="GO:0003724">
    <property type="term" value="F:RNA helicase activity"/>
    <property type="evidence" value="ECO:0007669"/>
    <property type="project" value="InterPro"/>
</dbReference>
<dbReference type="GO" id="GO:0006260">
    <property type="term" value="P:DNA replication"/>
    <property type="evidence" value="ECO:0007669"/>
    <property type="project" value="UniProtKB-KW"/>
</dbReference>
<dbReference type="Gene3D" id="3.40.1310.30">
    <property type="match status" value="1"/>
</dbReference>
<dbReference type="Gene3D" id="3.40.50.300">
    <property type="entry name" value="P-loop containing nucleotide triphosphate hydrolases"/>
    <property type="match status" value="1"/>
</dbReference>
<dbReference type="InterPro" id="IPR000605">
    <property type="entry name" value="Helicase_SF3_ssDNA/RNA_vir"/>
</dbReference>
<dbReference type="InterPro" id="IPR027417">
    <property type="entry name" value="P-loop_NTPase"/>
</dbReference>
<dbReference type="InterPro" id="IPR002631">
    <property type="entry name" value="Plasmid_rep_OBD"/>
</dbReference>
<dbReference type="Pfam" id="PF01719">
    <property type="entry name" value="Rep_OBD"/>
    <property type="match status" value="1"/>
</dbReference>
<dbReference type="Pfam" id="PF00910">
    <property type="entry name" value="RNA_helicase"/>
    <property type="match status" value="1"/>
</dbReference>
<dbReference type="SUPFAM" id="SSF52540">
    <property type="entry name" value="P-loop containing nucleoside triphosphate hydrolases"/>
    <property type="match status" value="1"/>
</dbReference>
<comment type="function">
    <text evidence="1">Is essential for plasmid replication. Nicks the positive strand at the plus origin of replication (By similarity).</text>
</comment>
<comment type="similarity">
    <text evidence="3">Belongs to the Gram-positive plasmids replication protein type 2 family.</text>
</comment>
<name>REPP_ONYPE</name>
<geneLocation type="plasmid">
    <name>pOYM</name>
</geneLocation>
<geneLocation type="plasmid">
    <name>pOYNIM</name>
</geneLocation>
<organism>
    <name type="scientific">Onion yellows phytoplasma (strain OY-M)</name>
    <dbReference type="NCBI Taxonomy" id="262768"/>
    <lineage>
        <taxon>Bacteria</taxon>
        <taxon>Bacillati</taxon>
        <taxon>Mycoplasmatota</taxon>
        <taxon>Mollicutes</taxon>
        <taxon>Acholeplasmatales</taxon>
        <taxon>Acholeplasmataceae</taxon>
        <taxon>Candidatus Phytoplasma</taxon>
        <taxon>16SrI (Aster yellows group)</taxon>
    </lineage>
</organism>